<name>LEPA_DESOH</name>
<evidence type="ECO:0000255" key="1">
    <source>
        <dbReference type="HAMAP-Rule" id="MF_00071"/>
    </source>
</evidence>
<proteinExistence type="inferred from homology"/>
<dbReference type="EC" id="3.6.5.n1" evidence="1"/>
<dbReference type="EMBL" id="CP000859">
    <property type="protein sequence ID" value="ABW67530.1"/>
    <property type="molecule type" value="Genomic_DNA"/>
</dbReference>
<dbReference type="RefSeq" id="WP_012175146.1">
    <property type="nucleotide sequence ID" value="NC_009943.1"/>
</dbReference>
<dbReference type="SMR" id="A9A0N0"/>
<dbReference type="STRING" id="96561.Dole_1726"/>
<dbReference type="KEGG" id="dol:Dole_1726"/>
<dbReference type="eggNOG" id="COG0481">
    <property type="taxonomic scope" value="Bacteria"/>
</dbReference>
<dbReference type="HOGENOM" id="CLU_009995_3_3_7"/>
<dbReference type="OrthoDB" id="9760518at2"/>
<dbReference type="Proteomes" id="UP000008561">
    <property type="component" value="Chromosome"/>
</dbReference>
<dbReference type="GO" id="GO:0005886">
    <property type="term" value="C:plasma membrane"/>
    <property type="evidence" value="ECO:0007669"/>
    <property type="project" value="UniProtKB-SubCell"/>
</dbReference>
<dbReference type="GO" id="GO:0005525">
    <property type="term" value="F:GTP binding"/>
    <property type="evidence" value="ECO:0007669"/>
    <property type="project" value="UniProtKB-UniRule"/>
</dbReference>
<dbReference type="GO" id="GO:0003924">
    <property type="term" value="F:GTPase activity"/>
    <property type="evidence" value="ECO:0007669"/>
    <property type="project" value="UniProtKB-UniRule"/>
</dbReference>
<dbReference type="GO" id="GO:0043022">
    <property type="term" value="F:ribosome binding"/>
    <property type="evidence" value="ECO:0007669"/>
    <property type="project" value="UniProtKB-UniRule"/>
</dbReference>
<dbReference type="GO" id="GO:0003746">
    <property type="term" value="F:translation elongation factor activity"/>
    <property type="evidence" value="ECO:0007669"/>
    <property type="project" value="UniProtKB-UniRule"/>
</dbReference>
<dbReference type="GO" id="GO:0045727">
    <property type="term" value="P:positive regulation of translation"/>
    <property type="evidence" value="ECO:0007669"/>
    <property type="project" value="UniProtKB-UniRule"/>
</dbReference>
<dbReference type="CDD" id="cd03699">
    <property type="entry name" value="EF4_II"/>
    <property type="match status" value="1"/>
</dbReference>
<dbReference type="CDD" id="cd16260">
    <property type="entry name" value="EF4_III"/>
    <property type="match status" value="1"/>
</dbReference>
<dbReference type="CDD" id="cd01890">
    <property type="entry name" value="LepA"/>
    <property type="match status" value="1"/>
</dbReference>
<dbReference type="CDD" id="cd03709">
    <property type="entry name" value="lepA_C"/>
    <property type="match status" value="1"/>
</dbReference>
<dbReference type="FunFam" id="3.40.50.300:FF:000078">
    <property type="entry name" value="Elongation factor 4"/>
    <property type="match status" value="1"/>
</dbReference>
<dbReference type="FunFam" id="2.40.30.10:FF:000015">
    <property type="entry name" value="Translation factor GUF1, mitochondrial"/>
    <property type="match status" value="1"/>
</dbReference>
<dbReference type="FunFam" id="3.30.70.240:FF:000007">
    <property type="entry name" value="Translation factor GUF1, mitochondrial"/>
    <property type="match status" value="1"/>
</dbReference>
<dbReference type="FunFam" id="3.30.70.2570:FF:000001">
    <property type="entry name" value="Translation factor GUF1, mitochondrial"/>
    <property type="match status" value="1"/>
</dbReference>
<dbReference type="FunFam" id="3.30.70.870:FF:000004">
    <property type="entry name" value="Translation factor GUF1, mitochondrial"/>
    <property type="match status" value="1"/>
</dbReference>
<dbReference type="Gene3D" id="3.30.70.240">
    <property type="match status" value="1"/>
</dbReference>
<dbReference type="Gene3D" id="3.30.70.2570">
    <property type="entry name" value="Elongation factor 4, C-terminal domain"/>
    <property type="match status" value="1"/>
</dbReference>
<dbReference type="Gene3D" id="3.30.70.870">
    <property type="entry name" value="Elongation Factor G (Translational Gtpase), domain 3"/>
    <property type="match status" value="1"/>
</dbReference>
<dbReference type="Gene3D" id="3.40.50.300">
    <property type="entry name" value="P-loop containing nucleotide triphosphate hydrolases"/>
    <property type="match status" value="1"/>
</dbReference>
<dbReference type="Gene3D" id="2.40.30.10">
    <property type="entry name" value="Translation factors"/>
    <property type="match status" value="1"/>
</dbReference>
<dbReference type="HAMAP" id="MF_00071">
    <property type="entry name" value="LepA"/>
    <property type="match status" value="1"/>
</dbReference>
<dbReference type="InterPro" id="IPR006297">
    <property type="entry name" value="EF-4"/>
</dbReference>
<dbReference type="InterPro" id="IPR035647">
    <property type="entry name" value="EFG_III/V"/>
</dbReference>
<dbReference type="InterPro" id="IPR000640">
    <property type="entry name" value="EFG_V-like"/>
</dbReference>
<dbReference type="InterPro" id="IPR004161">
    <property type="entry name" value="EFTu-like_2"/>
</dbReference>
<dbReference type="InterPro" id="IPR031157">
    <property type="entry name" value="G_TR_CS"/>
</dbReference>
<dbReference type="InterPro" id="IPR038363">
    <property type="entry name" value="LepA_C_sf"/>
</dbReference>
<dbReference type="InterPro" id="IPR013842">
    <property type="entry name" value="LepA_CTD"/>
</dbReference>
<dbReference type="InterPro" id="IPR035654">
    <property type="entry name" value="LepA_IV"/>
</dbReference>
<dbReference type="InterPro" id="IPR027417">
    <property type="entry name" value="P-loop_NTPase"/>
</dbReference>
<dbReference type="InterPro" id="IPR005225">
    <property type="entry name" value="Small_GTP-bd"/>
</dbReference>
<dbReference type="InterPro" id="IPR000795">
    <property type="entry name" value="T_Tr_GTP-bd_dom"/>
</dbReference>
<dbReference type="InterPro" id="IPR009000">
    <property type="entry name" value="Transl_B-barrel_sf"/>
</dbReference>
<dbReference type="NCBIfam" id="TIGR01393">
    <property type="entry name" value="lepA"/>
    <property type="match status" value="1"/>
</dbReference>
<dbReference type="NCBIfam" id="TIGR00231">
    <property type="entry name" value="small_GTP"/>
    <property type="match status" value="1"/>
</dbReference>
<dbReference type="PANTHER" id="PTHR43512:SF4">
    <property type="entry name" value="TRANSLATION FACTOR GUF1 HOMOLOG, CHLOROPLASTIC"/>
    <property type="match status" value="1"/>
</dbReference>
<dbReference type="PANTHER" id="PTHR43512">
    <property type="entry name" value="TRANSLATION FACTOR GUF1-RELATED"/>
    <property type="match status" value="1"/>
</dbReference>
<dbReference type="Pfam" id="PF00679">
    <property type="entry name" value="EFG_C"/>
    <property type="match status" value="1"/>
</dbReference>
<dbReference type="Pfam" id="PF00009">
    <property type="entry name" value="GTP_EFTU"/>
    <property type="match status" value="1"/>
</dbReference>
<dbReference type="Pfam" id="PF03144">
    <property type="entry name" value="GTP_EFTU_D2"/>
    <property type="match status" value="1"/>
</dbReference>
<dbReference type="Pfam" id="PF06421">
    <property type="entry name" value="LepA_C"/>
    <property type="match status" value="1"/>
</dbReference>
<dbReference type="PRINTS" id="PR00315">
    <property type="entry name" value="ELONGATNFCT"/>
</dbReference>
<dbReference type="SUPFAM" id="SSF54980">
    <property type="entry name" value="EF-G C-terminal domain-like"/>
    <property type="match status" value="2"/>
</dbReference>
<dbReference type="SUPFAM" id="SSF52540">
    <property type="entry name" value="P-loop containing nucleoside triphosphate hydrolases"/>
    <property type="match status" value="1"/>
</dbReference>
<dbReference type="SUPFAM" id="SSF50447">
    <property type="entry name" value="Translation proteins"/>
    <property type="match status" value="1"/>
</dbReference>
<dbReference type="PROSITE" id="PS00301">
    <property type="entry name" value="G_TR_1"/>
    <property type="match status" value="1"/>
</dbReference>
<dbReference type="PROSITE" id="PS51722">
    <property type="entry name" value="G_TR_2"/>
    <property type="match status" value="1"/>
</dbReference>
<keyword id="KW-0997">Cell inner membrane</keyword>
<keyword id="KW-1003">Cell membrane</keyword>
<keyword id="KW-0342">GTP-binding</keyword>
<keyword id="KW-0378">Hydrolase</keyword>
<keyword id="KW-0472">Membrane</keyword>
<keyword id="KW-0547">Nucleotide-binding</keyword>
<keyword id="KW-0648">Protein biosynthesis</keyword>
<keyword id="KW-1185">Reference proteome</keyword>
<organism>
    <name type="scientific">Desulfosudis oleivorans (strain DSM 6200 / JCM 39069 / Hxd3)</name>
    <name type="common">Desulfococcus oleovorans</name>
    <dbReference type="NCBI Taxonomy" id="96561"/>
    <lineage>
        <taxon>Bacteria</taxon>
        <taxon>Pseudomonadati</taxon>
        <taxon>Thermodesulfobacteriota</taxon>
        <taxon>Desulfobacteria</taxon>
        <taxon>Desulfobacterales</taxon>
        <taxon>Desulfosudaceae</taxon>
        <taxon>Desulfosudis</taxon>
    </lineage>
</organism>
<accession>A9A0N0</accession>
<comment type="function">
    <text evidence="1">Required for accurate and efficient protein synthesis under certain stress conditions. May act as a fidelity factor of the translation reaction, by catalyzing a one-codon backward translocation of tRNAs on improperly translocated ribosomes. Back-translocation proceeds from a post-translocation (POST) complex to a pre-translocation (PRE) complex, thus giving elongation factor G a second chance to translocate the tRNAs correctly. Binds to ribosomes in a GTP-dependent manner.</text>
</comment>
<comment type="catalytic activity">
    <reaction evidence="1">
        <text>GTP + H2O = GDP + phosphate + H(+)</text>
        <dbReference type="Rhea" id="RHEA:19669"/>
        <dbReference type="ChEBI" id="CHEBI:15377"/>
        <dbReference type="ChEBI" id="CHEBI:15378"/>
        <dbReference type="ChEBI" id="CHEBI:37565"/>
        <dbReference type="ChEBI" id="CHEBI:43474"/>
        <dbReference type="ChEBI" id="CHEBI:58189"/>
        <dbReference type="EC" id="3.6.5.n1"/>
    </reaction>
</comment>
<comment type="subcellular location">
    <subcellularLocation>
        <location evidence="1">Cell inner membrane</location>
        <topology evidence="1">Peripheral membrane protein</topology>
        <orientation evidence="1">Cytoplasmic side</orientation>
    </subcellularLocation>
</comment>
<comment type="similarity">
    <text evidence="1">Belongs to the TRAFAC class translation factor GTPase superfamily. Classic translation factor GTPase family. LepA subfamily.</text>
</comment>
<reference key="1">
    <citation type="submission" date="2007-10" db="EMBL/GenBank/DDBJ databases">
        <title>Complete sequence of Desulfococcus oleovorans Hxd3.</title>
        <authorList>
            <consortium name="US DOE Joint Genome Institute"/>
            <person name="Copeland A."/>
            <person name="Lucas S."/>
            <person name="Lapidus A."/>
            <person name="Barry K."/>
            <person name="Glavina del Rio T."/>
            <person name="Dalin E."/>
            <person name="Tice H."/>
            <person name="Pitluck S."/>
            <person name="Kiss H."/>
            <person name="Brettin T."/>
            <person name="Bruce D."/>
            <person name="Detter J.C."/>
            <person name="Han C."/>
            <person name="Schmutz J."/>
            <person name="Larimer F."/>
            <person name="Land M."/>
            <person name="Hauser L."/>
            <person name="Kyrpides N."/>
            <person name="Kim E."/>
            <person name="Wawrik B."/>
            <person name="Richardson P."/>
        </authorList>
    </citation>
    <scope>NUCLEOTIDE SEQUENCE [LARGE SCALE GENOMIC DNA]</scope>
    <source>
        <strain>DSM 6200 / JCM 39069 / Hxd3</strain>
    </source>
</reference>
<sequence>MNRIRNFSIIAHIDHGKSTLSDRLIQVSGIVAARDFRDQILDSMDLERERGITIKSQTICLPYKAKDGAVYSLNLIDTPGHVDFSYEVSRAIASCEGALILIDASQGVEAQTVANLYLAVDHDLEIIPVINKIDLISADVERVMEQIEEDLGLDSSAAVKVSAKEGVGIEDLMETIVAKLPPPKGNLEAPLQALIFDSTYDDFRGTVIHVRVFEGKVKPGDMIMFMSNDSVYKVEEVGIFQIVRKPRKVLAAGEVGYIIAGIKSLSDTRCGDTITLKTNRCAAAMPGFREAKPVVFSSIFPIGSDEYEDLATAIDKLKLNDASLVYEKTSSLALGFGFRCGFLGLLHLEIVQERLEREYDQSLIITAPTVRYEVVYHDGTSMFIDNPELFPDPTLIQTTREPFIKASIIIPDKYMGAVMTLCMERRGISTTYHYLTGSRMEMVFELPLAEVMYDFYDKLKTVTQGYGSFDYEMLDYRDSRLVKLDILVNGERVDALSQLAHEDKAVERARHACKMLSEEIPRQMFKIPIQGAIGGKIISRETISALRKDVTAKCYGGDISRKRKLLEKQKKGKKRMKTIGKVAIPQSAFLAVLKSDQT</sequence>
<gene>
    <name evidence="1" type="primary">lepA</name>
    <name type="ordered locus">Dole_1726</name>
</gene>
<feature type="chain" id="PRO_1000092394" description="Elongation factor 4">
    <location>
        <begin position="1"/>
        <end position="598"/>
    </location>
</feature>
<feature type="domain" description="tr-type G">
    <location>
        <begin position="2"/>
        <end position="184"/>
    </location>
</feature>
<feature type="binding site" evidence="1">
    <location>
        <begin position="14"/>
        <end position="19"/>
    </location>
    <ligand>
        <name>GTP</name>
        <dbReference type="ChEBI" id="CHEBI:37565"/>
    </ligand>
</feature>
<feature type="binding site" evidence="1">
    <location>
        <begin position="131"/>
        <end position="134"/>
    </location>
    <ligand>
        <name>GTP</name>
        <dbReference type="ChEBI" id="CHEBI:37565"/>
    </ligand>
</feature>
<protein>
    <recommendedName>
        <fullName evidence="1">Elongation factor 4</fullName>
        <shortName evidence="1">EF-4</shortName>
        <ecNumber evidence="1">3.6.5.n1</ecNumber>
    </recommendedName>
    <alternativeName>
        <fullName evidence="1">Ribosomal back-translocase LepA</fullName>
    </alternativeName>
</protein>